<sequence>MSTATSSTTSQHHIMGVYNRAPLAFERGRGARLISTEGEEYLDCVAGIATNGLGHAHPALVEVLKAQAEKLWHVSNIYRIPEQEELADALCANSFADVVFFTNSGTEAVECALKTARKYHSANGQPERIDIYGFDGSFHGRTYAAVNASGNPSYVDGFGPRLPGYSQLTFGDHDAIKAAIASPTTAAIIVEPVQGEGGARSIPTQCLVGLRQLCDEHGVLLIYDEVQCGMGRTGKLFAYEWAEGGEPHIMAVAKALGGGFPIGACLATTEAAKGMTVAAHGSTFGGNPLAMAVGKAALEIIKSPETLDNVKTVSGFFTQQLNGLKDRFPDVIVDVRGKGMLIGVKLIPNNRDFMVLARDEKLLIAGGGDNCVRLLPPLNLTIEEASEAIAKLEKACEAARAKAAA</sequence>
<organism>
    <name type="scientific">Caulobacter vibrioides (strain ATCC 19089 / CIP 103742 / CB 15)</name>
    <name type="common">Caulobacter crescentus</name>
    <dbReference type="NCBI Taxonomy" id="190650"/>
    <lineage>
        <taxon>Bacteria</taxon>
        <taxon>Pseudomonadati</taxon>
        <taxon>Pseudomonadota</taxon>
        <taxon>Alphaproteobacteria</taxon>
        <taxon>Caulobacterales</taxon>
        <taxon>Caulobacteraceae</taxon>
        <taxon>Caulobacter</taxon>
    </lineage>
</organism>
<keyword id="KW-0028">Amino-acid biosynthesis</keyword>
<keyword id="KW-0032">Aminotransferase</keyword>
<keyword id="KW-0055">Arginine biosynthesis</keyword>
<keyword id="KW-0963">Cytoplasm</keyword>
<keyword id="KW-0663">Pyridoxal phosphate</keyword>
<keyword id="KW-1185">Reference proteome</keyword>
<keyword id="KW-0808">Transferase</keyword>
<accession>Q9A652</accession>
<dbReference type="EC" id="2.6.1.11" evidence="1"/>
<dbReference type="EMBL" id="AE005673">
    <property type="protein sequence ID" value="AAK24214.1"/>
    <property type="molecule type" value="Genomic_DNA"/>
</dbReference>
<dbReference type="PIR" id="B87527">
    <property type="entry name" value="B87527"/>
</dbReference>
<dbReference type="RefSeq" id="NP_421046.1">
    <property type="nucleotide sequence ID" value="NC_002696.2"/>
</dbReference>
<dbReference type="RefSeq" id="WP_010920104.1">
    <property type="nucleotide sequence ID" value="NC_002696.2"/>
</dbReference>
<dbReference type="SMR" id="Q9A652"/>
<dbReference type="STRING" id="190650.CC_2243"/>
<dbReference type="EnsemblBacteria" id="AAK24214">
    <property type="protein sequence ID" value="AAK24214"/>
    <property type="gene ID" value="CC_2243"/>
</dbReference>
<dbReference type="KEGG" id="ccr:CC_2243"/>
<dbReference type="PATRIC" id="fig|190650.5.peg.2260"/>
<dbReference type="eggNOG" id="COG4992">
    <property type="taxonomic scope" value="Bacteria"/>
</dbReference>
<dbReference type="HOGENOM" id="CLU_016922_10_1_5"/>
<dbReference type="BioCyc" id="CAULO:CC2243-MONOMER"/>
<dbReference type="UniPathway" id="UPA00068">
    <property type="reaction ID" value="UER00109"/>
</dbReference>
<dbReference type="Proteomes" id="UP000001816">
    <property type="component" value="Chromosome"/>
</dbReference>
<dbReference type="GO" id="GO:0005737">
    <property type="term" value="C:cytoplasm"/>
    <property type="evidence" value="ECO:0007669"/>
    <property type="project" value="UniProtKB-SubCell"/>
</dbReference>
<dbReference type="GO" id="GO:0042802">
    <property type="term" value="F:identical protein binding"/>
    <property type="evidence" value="ECO:0007669"/>
    <property type="project" value="TreeGrafter"/>
</dbReference>
<dbReference type="GO" id="GO:0003992">
    <property type="term" value="F:N2-acetyl-L-ornithine:2-oxoglutarate 5-aminotransferase activity"/>
    <property type="evidence" value="ECO:0007669"/>
    <property type="project" value="UniProtKB-UniRule"/>
</dbReference>
<dbReference type="GO" id="GO:0030170">
    <property type="term" value="F:pyridoxal phosphate binding"/>
    <property type="evidence" value="ECO:0007669"/>
    <property type="project" value="InterPro"/>
</dbReference>
<dbReference type="GO" id="GO:0006526">
    <property type="term" value="P:L-arginine biosynthetic process"/>
    <property type="evidence" value="ECO:0007669"/>
    <property type="project" value="UniProtKB-UniRule"/>
</dbReference>
<dbReference type="CDD" id="cd00610">
    <property type="entry name" value="OAT_like"/>
    <property type="match status" value="1"/>
</dbReference>
<dbReference type="FunFam" id="3.40.640.10:FF:000004">
    <property type="entry name" value="Acetylornithine aminotransferase"/>
    <property type="match status" value="1"/>
</dbReference>
<dbReference type="Gene3D" id="3.90.1150.10">
    <property type="entry name" value="Aspartate Aminotransferase, domain 1"/>
    <property type="match status" value="1"/>
</dbReference>
<dbReference type="Gene3D" id="3.40.640.10">
    <property type="entry name" value="Type I PLP-dependent aspartate aminotransferase-like (Major domain)"/>
    <property type="match status" value="1"/>
</dbReference>
<dbReference type="HAMAP" id="MF_01107">
    <property type="entry name" value="ArgD_aminotrans_3"/>
    <property type="match status" value="1"/>
</dbReference>
<dbReference type="InterPro" id="IPR004636">
    <property type="entry name" value="AcOrn/SuccOrn_fam"/>
</dbReference>
<dbReference type="InterPro" id="IPR005814">
    <property type="entry name" value="Aminotrans_3"/>
</dbReference>
<dbReference type="InterPro" id="IPR049704">
    <property type="entry name" value="Aminotrans_3_PPA_site"/>
</dbReference>
<dbReference type="InterPro" id="IPR050103">
    <property type="entry name" value="Class-III_PLP-dep_AT"/>
</dbReference>
<dbReference type="InterPro" id="IPR015424">
    <property type="entry name" value="PyrdxlP-dep_Trfase"/>
</dbReference>
<dbReference type="InterPro" id="IPR015421">
    <property type="entry name" value="PyrdxlP-dep_Trfase_major"/>
</dbReference>
<dbReference type="InterPro" id="IPR015422">
    <property type="entry name" value="PyrdxlP-dep_Trfase_small"/>
</dbReference>
<dbReference type="NCBIfam" id="TIGR00707">
    <property type="entry name" value="argD"/>
    <property type="match status" value="1"/>
</dbReference>
<dbReference type="NCBIfam" id="NF002325">
    <property type="entry name" value="PRK01278.1"/>
    <property type="match status" value="1"/>
</dbReference>
<dbReference type="PANTHER" id="PTHR11986">
    <property type="entry name" value="AMINOTRANSFERASE CLASS III"/>
    <property type="match status" value="1"/>
</dbReference>
<dbReference type="PANTHER" id="PTHR11986:SF113">
    <property type="entry name" value="SUCCINYLORNITHINE TRANSAMINASE"/>
    <property type="match status" value="1"/>
</dbReference>
<dbReference type="Pfam" id="PF00202">
    <property type="entry name" value="Aminotran_3"/>
    <property type="match status" value="1"/>
</dbReference>
<dbReference type="PIRSF" id="PIRSF000521">
    <property type="entry name" value="Transaminase_4ab_Lys_Orn"/>
    <property type="match status" value="1"/>
</dbReference>
<dbReference type="SUPFAM" id="SSF53383">
    <property type="entry name" value="PLP-dependent transferases"/>
    <property type="match status" value="1"/>
</dbReference>
<dbReference type="PROSITE" id="PS00600">
    <property type="entry name" value="AA_TRANSFER_CLASS_3"/>
    <property type="match status" value="1"/>
</dbReference>
<gene>
    <name evidence="1" type="primary">argD2</name>
    <name type="ordered locus">CC_2243</name>
</gene>
<comment type="catalytic activity">
    <reaction evidence="1">
        <text>N(2)-acetyl-L-ornithine + 2-oxoglutarate = N-acetyl-L-glutamate 5-semialdehyde + L-glutamate</text>
        <dbReference type="Rhea" id="RHEA:18049"/>
        <dbReference type="ChEBI" id="CHEBI:16810"/>
        <dbReference type="ChEBI" id="CHEBI:29123"/>
        <dbReference type="ChEBI" id="CHEBI:29985"/>
        <dbReference type="ChEBI" id="CHEBI:57805"/>
        <dbReference type="EC" id="2.6.1.11"/>
    </reaction>
</comment>
<comment type="cofactor">
    <cofactor evidence="1">
        <name>pyridoxal 5'-phosphate</name>
        <dbReference type="ChEBI" id="CHEBI:597326"/>
    </cofactor>
    <text evidence="1">Binds 1 pyridoxal phosphate per subunit.</text>
</comment>
<comment type="pathway">
    <text evidence="1">Amino-acid biosynthesis; L-arginine biosynthesis; N(2)-acetyl-L-ornithine from L-glutamate: step 4/4.</text>
</comment>
<comment type="subunit">
    <text evidence="1">Homodimer.</text>
</comment>
<comment type="subcellular location">
    <subcellularLocation>
        <location evidence="1">Cytoplasm</location>
    </subcellularLocation>
</comment>
<comment type="miscellaneous">
    <text evidence="1">May also have succinyldiaminopimelate aminotransferase activity, thus carrying out the corresponding step in lysine biosynthesis.</text>
</comment>
<comment type="similarity">
    <text evidence="1">Belongs to the class-III pyridoxal-phosphate-dependent aminotransferase family. ArgD subfamily.</text>
</comment>
<proteinExistence type="inferred from homology"/>
<protein>
    <recommendedName>
        <fullName evidence="1">Acetylornithine aminotransferase 2</fullName>
        <shortName evidence="1">ACOAT 2</shortName>
        <ecNumber evidence="1">2.6.1.11</ecNumber>
    </recommendedName>
</protein>
<feature type="chain" id="PRO_0000112737" description="Acetylornithine aminotransferase 2">
    <location>
        <begin position="1"/>
        <end position="405"/>
    </location>
</feature>
<feature type="binding site" evidence="1">
    <location>
        <begin position="105"/>
        <end position="106"/>
    </location>
    <ligand>
        <name>pyridoxal 5'-phosphate</name>
        <dbReference type="ChEBI" id="CHEBI:597326"/>
    </ligand>
</feature>
<feature type="binding site" evidence="1">
    <location>
        <position position="138"/>
    </location>
    <ligand>
        <name>pyridoxal 5'-phosphate</name>
        <dbReference type="ChEBI" id="CHEBI:597326"/>
    </ligand>
</feature>
<feature type="binding site" evidence="1">
    <location>
        <position position="141"/>
    </location>
    <ligand>
        <name>N(2)-acetyl-L-ornithine</name>
        <dbReference type="ChEBI" id="CHEBI:57805"/>
    </ligand>
</feature>
<feature type="binding site" evidence="1">
    <location>
        <begin position="224"/>
        <end position="227"/>
    </location>
    <ligand>
        <name>pyridoxal 5'-phosphate</name>
        <dbReference type="ChEBI" id="CHEBI:597326"/>
    </ligand>
</feature>
<feature type="binding site" evidence="1">
    <location>
        <position position="282"/>
    </location>
    <ligand>
        <name>N(2)-acetyl-L-ornithine</name>
        <dbReference type="ChEBI" id="CHEBI:57805"/>
    </ligand>
</feature>
<feature type="binding site" evidence="1">
    <location>
        <position position="283"/>
    </location>
    <ligand>
        <name>pyridoxal 5'-phosphate</name>
        <dbReference type="ChEBI" id="CHEBI:597326"/>
    </ligand>
</feature>
<feature type="modified residue" description="N6-(pyridoxal phosphate)lysine" evidence="1">
    <location>
        <position position="254"/>
    </location>
</feature>
<reference key="1">
    <citation type="journal article" date="2001" name="Proc. Natl. Acad. Sci. U.S.A.">
        <title>Complete genome sequence of Caulobacter crescentus.</title>
        <authorList>
            <person name="Nierman W.C."/>
            <person name="Feldblyum T.V."/>
            <person name="Laub M.T."/>
            <person name="Paulsen I.T."/>
            <person name="Nelson K.E."/>
            <person name="Eisen J.A."/>
            <person name="Heidelberg J.F."/>
            <person name="Alley M.R.K."/>
            <person name="Ohta N."/>
            <person name="Maddock J.R."/>
            <person name="Potocka I."/>
            <person name="Nelson W.C."/>
            <person name="Newton A."/>
            <person name="Stephens C."/>
            <person name="Phadke N.D."/>
            <person name="Ely B."/>
            <person name="DeBoy R.T."/>
            <person name="Dodson R.J."/>
            <person name="Durkin A.S."/>
            <person name="Gwinn M.L."/>
            <person name="Haft D.H."/>
            <person name="Kolonay J.F."/>
            <person name="Smit J."/>
            <person name="Craven M.B."/>
            <person name="Khouri H.M."/>
            <person name="Shetty J."/>
            <person name="Berry K.J."/>
            <person name="Utterback T.R."/>
            <person name="Tran K."/>
            <person name="Wolf A.M."/>
            <person name="Vamathevan J.J."/>
            <person name="Ermolaeva M.D."/>
            <person name="White O."/>
            <person name="Salzberg S.L."/>
            <person name="Venter J.C."/>
            <person name="Shapiro L."/>
            <person name="Fraser C.M."/>
        </authorList>
    </citation>
    <scope>NUCLEOTIDE SEQUENCE [LARGE SCALE GENOMIC DNA]</scope>
    <source>
        <strain>ATCC 19089 / CIP 103742 / CB 15</strain>
    </source>
</reference>
<evidence type="ECO:0000255" key="1">
    <source>
        <dbReference type="HAMAP-Rule" id="MF_01107"/>
    </source>
</evidence>
<name>ARGD2_CAUVC</name>